<reference key="1">
    <citation type="journal article" date="1997" name="Nature">
        <title>The complete genome sequence of the hyperthermophilic, sulphate-reducing archaeon Archaeoglobus fulgidus.</title>
        <authorList>
            <person name="Klenk H.-P."/>
            <person name="Clayton R.A."/>
            <person name="Tomb J.-F."/>
            <person name="White O."/>
            <person name="Nelson K.E."/>
            <person name="Ketchum K.A."/>
            <person name="Dodson R.J."/>
            <person name="Gwinn M.L."/>
            <person name="Hickey E.K."/>
            <person name="Peterson J.D."/>
            <person name="Richardson D.L."/>
            <person name="Kerlavage A.R."/>
            <person name="Graham D.E."/>
            <person name="Kyrpides N.C."/>
            <person name="Fleischmann R.D."/>
            <person name="Quackenbush J."/>
            <person name="Lee N.H."/>
            <person name="Sutton G.G."/>
            <person name="Gill S.R."/>
            <person name="Kirkness E.F."/>
            <person name="Dougherty B.A."/>
            <person name="McKenney K."/>
            <person name="Adams M.D."/>
            <person name="Loftus B.J."/>
            <person name="Peterson S.N."/>
            <person name="Reich C.I."/>
            <person name="McNeil L.K."/>
            <person name="Badger J.H."/>
            <person name="Glodek A."/>
            <person name="Zhou L."/>
            <person name="Overbeek R."/>
            <person name="Gocayne J.D."/>
            <person name="Weidman J.F."/>
            <person name="McDonald L.A."/>
            <person name="Utterback T.R."/>
            <person name="Cotton M.D."/>
            <person name="Spriggs T."/>
            <person name="Artiach P."/>
            <person name="Kaine B.P."/>
            <person name="Sykes S.M."/>
            <person name="Sadow P.W."/>
            <person name="D'Andrea K.P."/>
            <person name="Bowman C."/>
            <person name="Fujii C."/>
            <person name="Garland S.A."/>
            <person name="Mason T.M."/>
            <person name="Olsen G.J."/>
            <person name="Fraser C.M."/>
            <person name="Smith H.O."/>
            <person name="Woese C.R."/>
            <person name="Venter J.C."/>
        </authorList>
    </citation>
    <scope>NUCLEOTIDE SEQUENCE [LARGE SCALE GENOMIC DNA]</scope>
    <source>
        <strain>ATCC 49558 / DSM 4304 / JCM 9628 / NBRC 100126 / VC-16</strain>
    </source>
</reference>
<accession>O29115</accession>
<protein>
    <recommendedName>
        <fullName>Prefoldin subunit beta</fullName>
    </recommendedName>
    <alternativeName>
        <fullName>GimC subunit beta</fullName>
    </alternativeName>
</protein>
<evidence type="ECO:0000250" key="1"/>
<evidence type="ECO:0000305" key="2"/>
<gene>
    <name type="primary">pfdB</name>
    <name type="ordered locus">AF_1150</name>
</gene>
<sequence>MGELPPQVQNLVAQLQQLQQQLQAVITQRAQVEALLRDTEQALEELQKVDDETPVYKAVGNILVKEKKEDVIKELTEKKETYEIRIKTLQRQEEKLRERFAETQQKLQNLLSPQAG</sequence>
<keyword id="KW-0143">Chaperone</keyword>
<keyword id="KW-0963">Cytoplasm</keyword>
<keyword id="KW-1185">Reference proteome</keyword>
<feature type="chain" id="PRO_0000124857" description="Prefoldin subunit beta">
    <location>
        <begin position="1"/>
        <end position="116"/>
    </location>
</feature>
<name>PFDB_ARCFU</name>
<proteinExistence type="inferred from homology"/>
<organism>
    <name type="scientific">Archaeoglobus fulgidus (strain ATCC 49558 / DSM 4304 / JCM 9628 / NBRC 100126 / VC-16)</name>
    <dbReference type="NCBI Taxonomy" id="224325"/>
    <lineage>
        <taxon>Archaea</taxon>
        <taxon>Methanobacteriati</taxon>
        <taxon>Methanobacteriota</taxon>
        <taxon>Archaeoglobi</taxon>
        <taxon>Archaeoglobales</taxon>
        <taxon>Archaeoglobaceae</taxon>
        <taxon>Archaeoglobus</taxon>
    </lineage>
</organism>
<dbReference type="EMBL" id="AE000782">
    <property type="protein sequence ID" value="AAB90093.1"/>
    <property type="molecule type" value="Genomic_DNA"/>
</dbReference>
<dbReference type="PIR" id="E69393">
    <property type="entry name" value="E69393"/>
</dbReference>
<dbReference type="RefSeq" id="WP_010878647.1">
    <property type="nucleotide sequence ID" value="NC_000917.1"/>
</dbReference>
<dbReference type="SMR" id="O29115"/>
<dbReference type="STRING" id="224325.AF_1150"/>
<dbReference type="PaxDb" id="224325-AF_1150"/>
<dbReference type="EnsemblBacteria" id="AAB90093">
    <property type="protein sequence ID" value="AAB90093"/>
    <property type="gene ID" value="AF_1150"/>
</dbReference>
<dbReference type="KEGG" id="afu:AF_1150"/>
<dbReference type="eggNOG" id="arCOG01342">
    <property type="taxonomic scope" value="Archaea"/>
</dbReference>
<dbReference type="HOGENOM" id="CLU_131909_1_1_2"/>
<dbReference type="OrthoDB" id="204796at2157"/>
<dbReference type="PhylomeDB" id="O29115"/>
<dbReference type="Proteomes" id="UP000002199">
    <property type="component" value="Chromosome"/>
</dbReference>
<dbReference type="GO" id="GO:0005737">
    <property type="term" value="C:cytoplasm"/>
    <property type="evidence" value="ECO:0007669"/>
    <property type="project" value="UniProtKB-SubCell"/>
</dbReference>
<dbReference type="GO" id="GO:0016272">
    <property type="term" value="C:prefoldin complex"/>
    <property type="evidence" value="ECO:0007669"/>
    <property type="project" value="UniProtKB-UniRule"/>
</dbReference>
<dbReference type="GO" id="GO:0044183">
    <property type="term" value="F:protein folding chaperone"/>
    <property type="evidence" value="ECO:0007669"/>
    <property type="project" value="TreeGrafter"/>
</dbReference>
<dbReference type="GO" id="GO:0051082">
    <property type="term" value="F:unfolded protein binding"/>
    <property type="evidence" value="ECO:0007669"/>
    <property type="project" value="UniProtKB-UniRule"/>
</dbReference>
<dbReference type="CDD" id="cd23162">
    <property type="entry name" value="Prefoldin_beta_GimC"/>
    <property type="match status" value="1"/>
</dbReference>
<dbReference type="Gene3D" id="1.10.287.370">
    <property type="match status" value="1"/>
</dbReference>
<dbReference type="HAMAP" id="MF_00307">
    <property type="entry name" value="PfdB"/>
    <property type="match status" value="1"/>
</dbReference>
<dbReference type="InterPro" id="IPR002777">
    <property type="entry name" value="PFD_beta-like"/>
</dbReference>
<dbReference type="InterPro" id="IPR012713">
    <property type="entry name" value="PfdB"/>
</dbReference>
<dbReference type="InterPro" id="IPR009053">
    <property type="entry name" value="Prefoldin"/>
</dbReference>
<dbReference type="NCBIfam" id="TIGR02338">
    <property type="entry name" value="gimC_beta"/>
    <property type="match status" value="1"/>
</dbReference>
<dbReference type="PANTHER" id="PTHR20903:SF0">
    <property type="entry name" value="PREFOLDIN SUBUNIT 1"/>
    <property type="match status" value="1"/>
</dbReference>
<dbReference type="PANTHER" id="PTHR20903">
    <property type="entry name" value="PREFOLDIN SUBUNIT 1-RELATED"/>
    <property type="match status" value="1"/>
</dbReference>
<dbReference type="Pfam" id="PF01920">
    <property type="entry name" value="Prefoldin_2"/>
    <property type="match status" value="1"/>
</dbReference>
<dbReference type="SUPFAM" id="SSF46579">
    <property type="entry name" value="Prefoldin"/>
    <property type="match status" value="1"/>
</dbReference>
<comment type="function">
    <text evidence="1">Molecular chaperone capable of stabilizing a range of proteins. Seems to fulfill an ATP-independent, HSP70-like function in archaeal de novo protein folding (By similarity).</text>
</comment>
<comment type="subunit">
    <text evidence="1">Heterohexamer of two alpha and four beta subunits.</text>
</comment>
<comment type="subcellular location">
    <subcellularLocation>
        <location evidence="1">Cytoplasm</location>
    </subcellularLocation>
</comment>
<comment type="similarity">
    <text evidence="2">Belongs to the prefoldin subunit beta family.</text>
</comment>